<comment type="function">
    <text evidence="1">One of the primary rRNA binding proteins, it binds directly to 16S rRNA where it helps nucleate assembly of the platform of the 30S subunit by binding and bridging several RNA helices of the 16S rRNA.</text>
</comment>
<comment type="function">
    <text evidence="1">Forms an intersubunit bridge (bridge B4) with the 23S rRNA of the 50S subunit in the ribosome.</text>
</comment>
<comment type="subunit">
    <text evidence="1">Part of the 30S ribosomal subunit. Forms a bridge to the 50S subunit in the 70S ribosome, contacting the 23S rRNA.</text>
</comment>
<comment type="similarity">
    <text evidence="1">Belongs to the universal ribosomal protein uS15 family.</text>
</comment>
<dbReference type="EMBL" id="CP000247">
    <property type="protein sequence ID" value="ABG71235.1"/>
    <property type="molecule type" value="Genomic_DNA"/>
</dbReference>
<dbReference type="RefSeq" id="WP_000059466.1">
    <property type="nucleotide sequence ID" value="NC_008253.1"/>
</dbReference>
<dbReference type="SMR" id="Q0TCU4"/>
<dbReference type="GeneID" id="93778818"/>
<dbReference type="KEGG" id="ecp:ECP_3253"/>
<dbReference type="HOGENOM" id="CLU_148518_0_0_6"/>
<dbReference type="Proteomes" id="UP000009182">
    <property type="component" value="Chromosome"/>
</dbReference>
<dbReference type="GO" id="GO:0022627">
    <property type="term" value="C:cytosolic small ribosomal subunit"/>
    <property type="evidence" value="ECO:0007669"/>
    <property type="project" value="TreeGrafter"/>
</dbReference>
<dbReference type="GO" id="GO:0019843">
    <property type="term" value="F:rRNA binding"/>
    <property type="evidence" value="ECO:0007669"/>
    <property type="project" value="UniProtKB-UniRule"/>
</dbReference>
<dbReference type="GO" id="GO:0003735">
    <property type="term" value="F:structural constituent of ribosome"/>
    <property type="evidence" value="ECO:0007669"/>
    <property type="project" value="InterPro"/>
</dbReference>
<dbReference type="GO" id="GO:0006412">
    <property type="term" value="P:translation"/>
    <property type="evidence" value="ECO:0007669"/>
    <property type="project" value="UniProtKB-UniRule"/>
</dbReference>
<dbReference type="CDD" id="cd00353">
    <property type="entry name" value="Ribosomal_S15p_S13e"/>
    <property type="match status" value="1"/>
</dbReference>
<dbReference type="FunFam" id="1.10.287.10:FF:000002">
    <property type="entry name" value="30S ribosomal protein S15"/>
    <property type="match status" value="1"/>
</dbReference>
<dbReference type="Gene3D" id="6.10.250.3130">
    <property type="match status" value="1"/>
</dbReference>
<dbReference type="Gene3D" id="1.10.287.10">
    <property type="entry name" value="S15/NS1, RNA-binding"/>
    <property type="match status" value="1"/>
</dbReference>
<dbReference type="HAMAP" id="MF_01343_B">
    <property type="entry name" value="Ribosomal_uS15_B"/>
    <property type="match status" value="1"/>
</dbReference>
<dbReference type="InterPro" id="IPR000589">
    <property type="entry name" value="Ribosomal_uS15"/>
</dbReference>
<dbReference type="InterPro" id="IPR005290">
    <property type="entry name" value="Ribosomal_uS15_bac-type"/>
</dbReference>
<dbReference type="InterPro" id="IPR009068">
    <property type="entry name" value="uS15_NS1_RNA-bd_sf"/>
</dbReference>
<dbReference type="NCBIfam" id="TIGR00952">
    <property type="entry name" value="S15_bact"/>
    <property type="match status" value="1"/>
</dbReference>
<dbReference type="PANTHER" id="PTHR23321">
    <property type="entry name" value="RIBOSOMAL PROTEIN S15, BACTERIAL AND ORGANELLAR"/>
    <property type="match status" value="1"/>
</dbReference>
<dbReference type="PANTHER" id="PTHR23321:SF26">
    <property type="entry name" value="SMALL RIBOSOMAL SUBUNIT PROTEIN US15M"/>
    <property type="match status" value="1"/>
</dbReference>
<dbReference type="Pfam" id="PF00312">
    <property type="entry name" value="Ribosomal_S15"/>
    <property type="match status" value="1"/>
</dbReference>
<dbReference type="SMART" id="SM01387">
    <property type="entry name" value="Ribosomal_S15"/>
    <property type="match status" value="1"/>
</dbReference>
<dbReference type="SUPFAM" id="SSF47060">
    <property type="entry name" value="S15/NS1 RNA-binding domain"/>
    <property type="match status" value="1"/>
</dbReference>
<dbReference type="PROSITE" id="PS00362">
    <property type="entry name" value="RIBOSOMAL_S15"/>
    <property type="match status" value="1"/>
</dbReference>
<reference key="1">
    <citation type="journal article" date="2006" name="Mol. Microbiol.">
        <title>Role of pathogenicity island-associated integrases in the genome plasticity of uropathogenic Escherichia coli strain 536.</title>
        <authorList>
            <person name="Hochhut B."/>
            <person name="Wilde C."/>
            <person name="Balling G."/>
            <person name="Middendorf B."/>
            <person name="Dobrindt U."/>
            <person name="Brzuszkiewicz E."/>
            <person name="Gottschalk G."/>
            <person name="Carniel E."/>
            <person name="Hacker J."/>
        </authorList>
    </citation>
    <scope>NUCLEOTIDE SEQUENCE [LARGE SCALE GENOMIC DNA]</scope>
    <source>
        <strain>536 / UPEC</strain>
    </source>
</reference>
<gene>
    <name evidence="1" type="primary">rpsO</name>
    <name type="ordered locus">ECP_3253</name>
</gene>
<name>RS15_ECOL5</name>
<feature type="chain" id="PRO_0000255494" description="Small ribosomal subunit protein uS15">
    <location>
        <begin position="1"/>
        <end position="89"/>
    </location>
</feature>
<protein>
    <recommendedName>
        <fullName evidence="1">Small ribosomal subunit protein uS15</fullName>
    </recommendedName>
    <alternativeName>
        <fullName evidence="2">30S ribosomal protein S15</fullName>
    </alternativeName>
</protein>
<organism>
    <name type="scientific">Escherichia coli O6:K15:H31 (strain 536 / UPEC)</name>
    <dbReference type="NCBI Taxonomy" id="362663"/>
    <lineage>
        <taxon>Bacteria</taxon>
        <taxon>Pseudomonadati</taxon>
        <taxon>Pseudomonadota</taxon>
        <taxon>Gammaproteobacteria</taxon>
        <taxon>Enterobacterales</taxon>
        <taxon>Enterobacteriaceae</taxon>
        <taxon>Escherichia</taxon>
    </lineage>
</organism>
<evidence type="ECO:0000255" key="1">
    <source>
        <dbReference type="HAMAP-Rule" id="MF_01343"/>
    </source>
</evidence>
<evidence type="ECO:0000305" key="2"/>
<accession>Q0TCU4</accession>
<sequence>MSLSTEATAKIVSEFGRDANDTGSTEVQVALLTAQINHLQGHFAEHKKDHHSRRGLLRMVSQRRKLLDYLKRKDVARYTQLIERLGLRR</sequence>
<keyword id="KW-0687">Ribonucleoprotein</keyword>
<keyword id="KW-0689">Ribosomal protein</keyword>
<keyword id="KW-0694">RNA-binding</keyword>
<keyword id="KW-0699">rRNA-binding</keyword>
<proteinExistence type="inferred from homology"/>